<proteinExistence type="evidence at protein level"/>
<feature type="chain" id="PRO_0000298909" description="Transcription factor E2F8">
    <location>
        <begin position="1"/>
        <end position="867"/>
    </location>
</feature>
<feature type="DNA-binding region" evidence="2">
    <location>
        <begin position="113"/>
        <end position="182"/>
    </location>
</feature>
<feature type="DNA-binding region" evidence="2">
    <location>
        <begin position="261"/>
        <end position="347"/>
    </location>
</feature>
<feature type="region of interest" description="Disordered" evidence="3">
    <location>
        <begin position="38"/>
        <end position="58"/>
    </location>
</feature>
<feature type="region of interest" description="Disordered" evidence="3">
    <location>
        <begin position="408"/>
        <end position="432"/>
    </location>
</feature>
<feature type="region of interest" description="Disordered" evidence="3">
    <location>
        <begin position="532"/>
        <end position="616"/>
    </location>
</feature>
<feature type="region of interest" description="Disordered" evidence="3">
    <location>
        <begin position="771"/>
        <end position="800"/>
    </location>
</feature>
<feature type="compositionally biased region" description="Polar residues" evidence="3">
    <location>
        <begin position="413"/>
        <end position="432"/>
    </location>
</feature>
<feature type="compositionally biased region" description="Polar residues" evidence="3">
    <location>
        <begin position="532"/>
        <end position="556"/>
    </location>
</feature>
<feature type="compositionally biased region" description="Basic and acidic residues" evidence="3">
    <location>
        <begin position="557"/>
        <end position="567"/>
    </location>
</feature>
<feature type="compositionally biased region" description="Polar residues" evidence="3">
    <location>
        <begin position="568"/>
        <end position="579"/>
    </location>
</feature>
<feature type="compositionally biased region" description="Basic and acidic residues" evidence="3">
    <location>
        <begin position="594"/>
        <end position="604"/>
    </location>
</feature>
<feature type="compositionally biased region" description="Polar residues" evidence="3">
    <location>
        <begin position="775"/>
        <end position="800"/>
    </location>
</feature>
<feature type="modified residue" description="Phosphoserine" evidence="10">
    <location>
        <position position="71"/>
    </location>
</feature>
<feature type="modified residue" description="Phosphoserine" evidence="10">
    <location>
        <position position="102"/>
    </location>
</feature>
<feature type="modified residue" description="Phosphoserine" evidence="10">
    <location>
        <position position="413"/>
    </location>
</feature>
<feature type="modified residue" description="Phosphoserine" evidence="10">
    <location>
        <position position="417"/>
    </location>
</feature>
<feature type="sequence variant" id="VAR_034735" description="In dbSNP:rs793274.">
    <original>I</original>
    <variation>V</variation>
    <location>
        <position position="674"/>
    </location>
</feature>
<feature type="mutagenesis site" description="Loss of DNA-binding and inhibition of E2F1-dependent activation. Impairs DNA-binding and dimerization; when associated with A-314." evidence="4 7">
    <original>R</original>
    <variation>A</variation>
    <location>
        <position position="156"/>
    </location>
</feature>
<feature type="mutagenesis site" description="Loss of DNA-binding and inhibition of E2F1-dependent activation. Impairs DNA-binding and dimerization; when associated with A-156." evidence="4 7">
    <original>R</original>
    <variation>A</variation>
    <location>
        <position position="314"/>
    </location>
</feature>
<feature type="sequence conflict" description="In Ref. 4; BAE46901." evidence="9" ref="4">
    <original>N</original>
    <variation>I</variation>
    <location>
        <position position="138"/>
    </location>
</feature>
<feature type="sequence conflict" description="In Ref. 1; BAB15605." evidence="9" ref="1">
    <original>K</original>
    <variation>R</variation>
    <location>
        <position position="460"/>
    </location>
</feature>
<feature type="helix" evidence="11">
    <location>
        <begin position="114"/>
        <end position="116"/>
    </location>
</feature>
<feature type="helix" evidence="11">
    <location>
        <begin position="118"/>
        <end position="128"/>
    </location>
</feature>
<feature type="strand" evidence="11">
    <location>
        <begin position="135"/>
        <end position="137"/>
    </location>
</feature>
<feature type="helix" evidence="11">
    <location>
        <begin position="142"/>
        <end position="148"/>
    </location>
</feature>
<feature type="helix" evidence="11">
    <location>
        <begin position="154"/>
        <end position="166"/>
    </location>
</feature>
<feature type="strand" evidence="11">
    <location>
        <begin position="169"/>
        <end position="174"/>
    </location>
</feature>
<feature type="strand" evidence="11">
    <location>
        <begin position="177"/>
        <end position="179"/>
    </location>
</feature>
<feature type="helix" evidence="11">
    <location>
        <begin position="186"/>
        <end position="196"/>
    </location>
</feature>
<feature type="helix" evidence="11">
    <location>
        <begin position="199"/>
        <end position="209"/>
    </location>
</feature>
<feature type="helix" evidence="11">
    <location>
        <begin position="266"/>
        <end position="276"/>
    </location>
</feature>
<feature type="helix" evidence="11">
    <location>
        <begin position="286"/>
        <end position="296"/>
    </location>
</feature>
<feature type="strand" evidence="11">
    <location>
        <begin position="305"/>
        <end position="307"/>
    </location>
</feature>
<feature type="helix" evidence="11">
    <location>
        <begin position="308"/>
        <end position="321"/>
    </location>
</feature>
<feature type="strand" evidence="11">
    <location>
        <begin position="324"/>
        <end position="327"/>
    </location>
</feature>
<feature type="strand" evidence="11">
    <location>
        <begin position="332"/>
        <end position="334"/>
    </location>
</feature>
<sequence length="867" mass="94166">MENEKENLFCEPHKRGLMKTPLKESTTANIVLAEIQPDFGPLTTPTKPKEGSQGEPWTPTANLKMLISAVSPEIRNRDQKRGLFDNRSGLPEAKDCIHEHLSGDEFEKSQPSRKEKSLGLLCHKFLARYPNYPNPAVNNDICLDEVAEELNVERRRIYDIVNVLESLHMVSRLAKNRYTWHGRHNLNKTLGTLKSIGEENKYAEQIMMIKKKEYEQEFDFIKSYSIEDHIIKSNTGPNGHPDMCFVELPGVEFRAASVNSRKDKSLRVMSQKFVMLFLVSTPQIVSLEVAAKILIGEDHVEDLDKSKFKTKIRRLYDIANVLSSLDLIKKVHVTEERGRKPAFKWTGPEISPNTSGSSPVIHFTPSDLEVRRSSKENCAKNLFSTRGKPNFTRHPSLIKLVKSIESDRRKINSAPSSPIKTNKAESSQNSAPFPSKMAQLAAICKMQLEEQSSESRQKVKVQLARSGPCKPVAPLDPPVNAEMELTAPSLIQPLGMVPLIPSPLSSAVPLILPQAPSGPSYAIYLQPTQAHQSVTPPQGLSPTVCTTHSSKATGSKDSTDATTEKAANDTSKASASTRPGSLLPAPERQGAKSRTREPAGERGSKRASMLEDSGSKKKFKEDLKGLENVSATLFPSGYLIPLTQCSSLGAESILSGKENSSALSPNHRIYSSPIAGVIPVTSSELTAVNFPSFHVTPLKLMVSPTSVAAVPVGNSPALASSHPVPIQNPSSAIVNFTLQHLGLISPNVQLSASPGSGIVPVSPRIESVNVAPENAGTQQGRATNYDSPVPGQSQPNGQSVAVTGAQQPVPVTPKGSQLVAESFFRTPGGPTKPTSSSCMDFEGANKTSLGTLFVPQRKLEVSTEDVH</sequence>
<evidence type="ECO:0000250" key="1"/>
<evidence type="ECO:0000255" key="2"/>
<evidence type="ECO:0000256" key="3">
    <source>
        <dbReference type="SAM" id="MobiDB-lite"/>
    </source>
</evidence>
<evidence type="ECO:0000269" key="4">
    <source>
    </source>
</evidence>
<evidence type="ECO:0000269" key="5">
    <source>
    </source>
</evidence>
<evidence type="ECO:0000269" key="6">
    <source>
    </source>
</evidence>
<evidence type="ECO:0000269" key="7">
    <source>
    </source>
</evidence>
<evidence type="ECO:0000269" key="8">
    <source>
    </source>
</evidence>
<evidence type="ECO:0000305" key="9"/>
<evidence type="ECO:0007744" key="10">
    <source>
    </source>
</evidence>
<evidence type="ECO:0007829" key="11">
    <source>
        <dbReference type="PDB" id="4YO2"/>
    </source>
</evidence>
<dbReference type="EMBL" id="AK026964">
    <property type="protein sequence ID" value="BAB15605.1"/>
    <property type="status" value="ALT_INIT"/>
    <property type="molecule type" value="mRNA"/>
</dbReference>
<dbReference type="EMBL" id="AK292688">
    <property type="protein sequence ID" value="BAF85377.1"/>
    <property type="molecule type" value="mRNA"/>
</dbReference>
<dbReference type="EMBL" id="CH471064">
    <property type="protein sequence ID" value="EAW68354.1"/>
    <property type="molecule type" value="Genomic_DNA"/>
</dbReference>
<dbReference type="EMBL" id="BC028244">
    <property type="protein sequence ID" value="AAH28244.2"/>
    <property type="status" value="ALT_INIT"/>
    <property type="molecule type" value="mRNA"/>
</dbReference>
<dbReference type="EMBL" id="BC090877">
    <property type="protein sequence ID" value="AAH90877.1"/>
    <property type="molecule type" value="mRNA"/>
</dbReference>
<dbReference type="EMBL" id="BC108700">
    <property type="protein sequence ID" value="AAI08701.1"/>
    <property type="molecule type" value="mRNA"/>
</dbReference>
<dbReference type="EMBL" id="BC126400">
    <property type="protein sequence ID" value="AAI26401.1"/>
    <property type="molecule type" value="mRNA"/>
</dbReference>
<dbReference type="EMBL" id="BC126402">
    <property type="protein sequence ID" value="AAI26403.1"/>
    <property type="molecule type" value="mRNA"/>
</dbReference>
<dbReference type="EMBL" id="AB231781">
    <property type="protein sequence ID" value="BAE46901.1"/>
    <property type="molecule type" value="mRNA"/>
</dbReference>
<dbReference type="CCDS" id="CCDS7849.1"/>
<dbReference type="RefSeq" id="NP_001243300.1">
    <property type="nucleotide sequence ID" value="NM_001256371.2"/>
</dbReference>
<dbReference type="RefSeq" id="NP_001243301.1">
    <property type="nucleotide sequence ID" value="NM_001256372.1"/>
</dbReference>
<dbReference type="RefSeq" id="NP_078956.2">
    <property type="nucleotide sequence ID" value="NM_024680.3"/>
</dbReference>
<dbReference type="PDB" id="4YO2">
    <property type="method" value="X-ray"/>
    <property type="resolution" value="3.07 A"/>
    <property type="chains" value="A=110-341"/>
</dbReference>
<dbReference type="PDBsum" id="4YO2"/>
<dbReference type="SMR" id="A0AVK6"/>
<dbReference type="BioGRID" id="122847">
    <property type="interactions" value="32"/>
</dbReference>
<dbReference type="FunCoup" id="A0AVK6">
    <property type="interactions" value="1445"/>
</dbReference>
<dbReference type="IntAct" id="A0AVK6">
    <property type="interactions" value="33"/>
</dbReference>
<dbReference type="MINT" id="A0AVK6"/>
<dbReference type="STRING" id="9606.ENSP00000250024"/>
<dbReference type="ChEMBL" id="CHEMBL4630726"/>
<dbReference type="GlyGen" id="A0AVK6">
    <property type="glycosylation" value="4 sites, 1 O-linked glycan (2 sites)"/>
</dbReference>
<dbReference type="iPTMnet" id="A0AVK6"/>
<dbReference type="PhosphoSitePlus" id="A0AVK6"/>
<dbReference type="BioMuta" id="E2F8"/>
<dbReference type="jPOST" id="A0AVK6"/>
<dbReference type="MassIVE" id="A0AVK6"/>
<dbReference type="PaxDb" id="9606-ENSP00000481103"/>
<dbReference type="PeptideAtlas" id="A0AVK6"/>
<dbReference type="ProteomicsDB" id="24"/>
<dbReference type="Antibodypedia" id="25218">
    <property type="antibodies" value="198 antibodies from 32 providers"/>
</dbReference>
<dbReference type="DNASU" id="79733"/>
<dbReference type="Ensembl" id="ENST00000250024.9">
    <property type="protein sequence ID" value="ENSP00000250024.4"/>
    <property type="gene ID" value="ENSG00000129173.13"/>
</dbReference>
<dbReference type="Ensembl" id="ENST00000527884.5">
    <property type="protein sequence ID" value="ENSP00000434199.1"/>
    <property type="gene ID" value="ENSG00000129173.13"/>
</dbReference>
<dbReference type="Ensembl" id="ENST00000620009.4">
    <property type="protein sequence ID" value="ENSP00000481103.1"/>
    <property type="gene ID" value="ENSG00000129173.13"/>
</dbReference>
<dbReference type="GeneID" id="79733"/>
<dbReference type="KEGG" id="hsa:79733"/>
<dbReference type="MANE-Select" id="ENST00000250024.9">
    <property type="protein sequence ID" value="ENSP00000250024.4"/>
    <property type="RefSeq nucleotide sequence ID" value="NM_024680.4"/>
    <property type="RefSeq protein sequence ID" value="NP_078956.2"/>
</dbReference>
<dbReference type="UCSC" id="uc001mpm.4">
    <property type="organism name" value="human"/>
</dbReference>
<dbReference type="AGR" id="HGNC:24727"/>
<dbReference type="CTD" id="79733"/>
<dbReference type="DisGeNET" id="79733"/>
<dbReference type="GeneCards" id="E2F8"/>
<dbReference type="HGNC" id="HGNC:24727">
    <property type="gene designation" value="E2F8"/>
</dbReference>
<dbReference type="HPA" id="ENSG00000129173">
    <property type="expression patterns" value="Tissue enhanced (bone marrow, lymphoid tissue, skeletal muscle)"/>
</dbReference>
<dbReference type="MIM" id="612047">
    <property type="type" value="gene"/>
</dbReference>
<dbReference type="neXtProt" id="NX_A0AVK6"/>
<dbReference type="OpenTargets" id="ENSG00000129173"/>
<dbReference type="PharmGKB" id="PA142671918"/>
<dbReference type="VEuPathDB" id="HostDB:ENSG00000129173"/>
<dbReference type="eggNOG" id="KOG2578">
    <property type="taxonomic scope" value="Eukaryota"/>
</dbReference>
<dbReference type="GeneTree" id="ENSGT00940000158651"/>
<dbReference type="HOGENOM" id="CLU_014845_2_0_1"/>
<dbReference type="InParanoid" id="A0AVK6"/>
<dbReference type="OMA" id="LEHSVEC"/>
<dbReference type="OrthoDB" id="5318at2759"/>
<dbReference type="PAN-GO" id="A0AVK6">
    <property type="GO annotations" value="4 GO annotations based on evolutionary models"/>
</dbReference>
<dbReference type="PhylomeDB" id="A0AVK6"/>
<dbReference type="TreeFam" id="TF105567"/>
<dbReference type="PathwayCommons" id="A0AVK6"/>
<dbReference type="Reactome" id="R-HSA-6804116">
    <property type="pathway name" value="TP53 Regulates Transcription of Genes Involved in G1 Cell Cycle Arrest"/>
</dbReference>
<dbReference type="SignaLink" id="A0AVK6"/>
<dbReference type="BioGRID-ORCS" id="79733">
    <property type="hits" value="26 hits in 1193 CRISPR screens"/>
</dbReference>
<dbReference type="ChiTaRS" id="E2F8">
    <property type="organism name" value="human"/>
</dbReference>
<dbReference type="GenomeRNAi" id="79733"/>
<dbReference type="Pharos" id="A0AVK6">
    <property type="development level" value="Tbio"/>
</dbReference>
<dbReference type="PRO" id="PR:A0AVK6"/>
<dbReference type="Proteomes" id="UP000005640">
    <property type="component" value="Chromosome 11"/>
</dbReference>
<dbReference type="RNAct" id="A0AVK6">
    <property type="molecule type" value="protein"/>
</dbReference>
<dbReference type="Bgee" id="ENSG00000129173">
    <property type="expression patterns" value="Expressed in biceps brachii and 127 other cell types or tissues"/>
</dbReference>
<dbReference type="ExpressionAtlas" id="A0AVK6">
    <property type="expression patterns" value="baseline and differential"/>
</dbReference>
<dbReference type="GO" id="GO:0000785">
    <property type="term" value="C:chromatin"/>
    <property type="evidence" value="ECO:0000247"/>
    <property type="project" value="NTNU_SB"/>
</dbReference>
<dbReference type="GO" id="GO:0005829">
    <property type="term" value="C:cytosol"/>
    <property type="evidence" value="ECO:0000314"/>
    <property type="project" value="HPA"/>
</dbReference>
<dbReference type="GO" id="GO:0005730">
    <property type="term" value="C:nucleolus"/>
    <property type="evidence" value="ECO:0000314"/>
    <property type="project" value="HPA"/>
</dbReference>
<dbReference type="GO" id="GO:0005654">
    <property type="term" value="C:nucleoplasm"/>
    <property type="evidence" value="ECO:0000314"/>
    <property type="project" value="HPA"/>
</dbReference>
<dbReference type="GO" id="GO:0090575">
    <property type="term" value="C:RNA polymerase II transcription regulator complex"/>
    <property type="evidence" value="ECO:0000318"/>
    <property type="project" value="GO_Central"/>
</dbReference>
<dbReference type="GO" id="GO:0000987">
    <property type="term" value="F:cis-regulatory region sequence-specific DNA binding"/>
    <property type="evidence" value="ECO:0000314"/>
    <property type="project" value="UniProtKB"/>
</dbReference>
<dbReference type="GO" id="GO:0003700">
    <property type="term" value="F:DNA-binding transcription factor activity"/>
    <property type="evidence" value="ECO:0000315"/>
    <property type="project" value="UniProtKB"/>
</dbReference>
<dbReference type="GO" id="GO:0000981">
    <property type="term" value="F:DNA-binding transcription factor activity, RNA polymerase II-specific"/>
    <property type="evidence" value="ECO:0000247"/>
    <property type="project" value="NTNU_SB"/>
</dbReference>
<dbReference type="GO" id="GO:0001217">
    <property type="term" value="F:DNA-binding transcription repressor activity"/>
    <property type="evidence" value="ECO:0000250"/>
    <property type="project" value="UniProtKB"/>
</dbReference>
<dbReference type="GO" id="GO:0001227">
    <property type="term" value="F:DNA-binding transcription repressor activity, RNA polymerase II-specific"/>
    <property type="evidence" value="ECO:0000314"/>
    <property type="project" value="NTNU_SB"/>
</dbReference>
<dbReference type="GO" id="GO:0042802">
    <property type="term" value="F:identical protein binding"/>
    <property type="evidence" value="ECO:0007669"/>
    <property type="project" value="Ensembl"/>
</dbReference>
<dbReference type="GO" id="GO:0000978">
    <property type="term" value="F:RNA polymerase II cis-regulatory region sequence-specific DNA binding"/>
    <property type="evidence" value="ECO:0000314"/>
    <property type="project" value="NTNU_SB"/>
</dbReference>
<dbReference type="GO" id="GO:1990837">
    <property type="term" value="F:sequence-specific double-stranded DNA binding"/>
    <property type="evidence" value="ECO:0000314"/>
    <property type="project" value="ARUK-UCL"/>
</dbReference>
<dbReference type="GO" id="GO:0033301">
    <property type="term" value="P:cell cycle comprising mitosis without cytokinesis"/>
    <property type="evidence" value="ECO:0000250"/>
    <property type="project" value="UniProtKB"/>
</dbReference>
<dbReference type="GO" id="GO:0060718">
    <property type="term" value="P:chorionic trophoblast cell differentiation"/>
    <property type="evidence" value="ECO:0000250"/>
    <property type="project" value="UniProtKB"/>
</dbReference>
<dbReference type="GO" id="GO:0048144">
    <property type="term" value="P:fibroblast proliferation"/>
    <property type="evidence" value="ECO:0007669"/>
    <property type="project" value="Ensembl"/>
</dbReference>
<dbReference type="GO" id="GO:0070365">
    <property type="term" value="P:hepatocyte differentiation"/>
    <property type="evidence" value="ECO:0000250"/>
    <property type="project" value="UniProtKB"/>
</dbReference>
<dbReference type="GO" id="GO:0032466">
    <property type="term" value="P:negative regulation of cytokinesis"/>
    <property type="evidence" value="ECO:0000250"/>
    <property type="project" value="UniProtKB"/>
</dbReference>
<dbReference type="GO" id="GO:0000122">
    <property type="term" value="P:negative regulation of transcription by RNA polymerase II"/>
    <property type="evidence" value="ECO:0000314"/>
    <property type="project" value="NTNU_SB"/>
</dbReference>
<dbReference type="GO" id="GO:0001890">
    <property type="term" value="P:placenta development"/>
    <property type="evidence" value="ECO:0000250"/>
    <property type="project" value="UniProtKB"/>
</dbReference>
<dbReference type="GO" id="GO:0032877">
    <property type="term" value="P:positive regulation of DNA endoreduplication"/>
    <property type="evidence" value="ECO:0000250"/>
    <property type="project" value="UniProtKB"/>
</dbReference>
<dbReference type="GO" id="GO:0045944">
    <property type="term" value="P:positive regulation of transcription by RNA polymerase II"/>
    <property type="evidence" value="ECO:0000315"/>
    <property type="project" value="UniProtKB"/>
</dbReference>
<dbReference type="GO" id="GO:0006357">
    <property type="term" value="P:regulation of transcription by RNA polymerase II"/>
    <property type="evidence" value="ECO:0000318"/>
    <property type="project" value="GO_Central"/>
</dbReference>
<dbReference type="GO" id="GO:0002040">
    <property type="term" value="P:sprouting angiogenesis"/>
    <property type="evidence" value="ECO:0000315"/>
    <property type="project" value="UniProtKB"/>
</dbReference>
<dbReference type="GO" id="GO:0060707">
    <property type="term" value="P:trophoblast giant cell differentiation"/>
    <property type="evidence" value="ECO:0000250"/>
    <property type="project" value="UniProtKB"/>
</dbReference>
<dbReference type="FunFam" id="1.10.10.10:FF:000073">
    <property type="entry name" value="E2F transcription factor 8"/>
    <property type="match status" value="1"/>
</dbReference>
<dbReference type="FunFam" id="1.10.10.10:FF:000100">
    <property type="entry name" value="E2F transcription factor 8"/>
    <property type="match status" value="1"/>
</dbReference>
<dbReference type="Gene3D" id="1.10.10.10">
    <property type="entry name" value="Winged helix-like DNA-binding domain superfamily/Winged helix DNA-binding domain"/>
    <property type="match status" value="2"/>
</dbReference>
<dbReference type="InterPro" id="IPR015633">
    <property type="entry name" value="E2F"/>
</dbReference>
<dbReference type="InterPro" id="IPR003316">
    <property type="entry name" value="E2F_WHTH_DNA-bd_dom"/>
</dbReference>
<dbReference type="InterPro" id="IPR036388">
    <property type="entry name" value="WH-like_DNA-bd_sf"/>
</dbReference>
<dbReference type="InterPro" id="IPR036390">
    <property type="entry name" value="WH_DNA-bd_sf"/>
</dbReference>
<dbReference type="PANTHER" id="PTHR12081">
    <property type="entry name" value="TRANSCRIPTION FACTOR E2F"/>
    <property type="match status" value="1"/>
</dbReference>
<dbReference type="PANTHER" id="PTHR12081:SF40">
    <property type="entry name" value="TRANSCRIPTION FACTOR E2F8"/>
    <property type="match status" value="1"/>
</dbReference>
<dbReference type="Pfam" id="PF02319">
    <property type="entry name" value="E2F_TDP"/>
    <property type="match status" value="2"/>
</dbReference>
<dbReference type="SMART" id="SM01372">
    <property type="entry name" value="E2F_TDP"/>
    <property type="match status" value="2"/>
</dbReference>
<dbReference type="SUPFAM" id="SSF46785">
    <property type="entry name" value="Winged helix' DNA-binding domain"/>
    <property type="match status" value="2"/>
</dbReference>
<organism>
    <name type="scientific">Homo sapiens</name>
    <name type="common">Human</name>
    <dbReference type="NCBI Taxonomy" id="9606"/>
    <lineage>
        <taxon>Eukaryota</taxon>
        <taxon>Metazoa</taxon>
        <taxon>Chordata</taxon>
        <taxon>Craniata</taxon>
        <taxon>Vertebrata</taxon>
        <taxon>Euteleostomi</taxon>
        <taxon>Mammalia</taxon>
        <taxon>Eutheria</taxon>
        <taxon>Euarchontoglires</taxon>
        <taxon>Primates</taxon>
        <taxon>Haplorrhini</taxon>
        <taxon>Catarrhini</taxon>
        <taxon>Hominidae</taxon>
        <taxon>Homo</taxon>
    </lineage>
</organism>
<gene>
    <name type="primary">E2F8</name>
</gene>
<protein>
    <recommendedName>
        <fullName>Transcription factor E2F8</fullName>
        <shortName>E2F-8</shortName>
    </recommendedName>
</protein>
<accession>A0AVK6</accession>
<accession>A8K9H3</accession>
<accession>Q2VPJ3</accession>
<accession>Q3C1U6</accession>
<accession>Q5BKY4</accession>
<accession>Q8N340</accession>
<accession>Q9H5M0</accession>
<reference key="1">
    <citation type="journal article" date="2004" name="Nat. Genet.">
        <title>Complete sequencing and characterization of 21,243 full-length human cDNAs.</title>
        <authorList>
            <person name="Ota T."/>
            <person name="Suzuki Y."/>
            <person name="Nishikawa T."/>
            <person name="Otsuki T."/>
            <person name="Sugiyama T."/>
            <person name="Irie R."/>
            <person name="Wakamatsu A."/>
            <person name="Hayashi K."/>
            <person name="Sato H."/>
            <person name="Nagai K."/>
            <person name="Kimura K."/>
            <person name="Makita H."/>
            <person name="Sekine M."/>
            <person name="Obayashi M."/>
            <person name="Nishi T."/>
            <person name="Shibahara T."/>
            <person name="Tanaka T."/>
            <person name="Ishii S."/>
            <person name="Yamamoto J."/>
            <person name="Saito K."/>
            <person name="Kawai Y."/>
            <person name="Isono Y."/>
            <person name="Nakamura Y."/>
            <person name="Nagahari K."/>
            <person name="Murakami K."/>
            <person name="Yasuda T."/>
            <person name="Iwayanagi T."/>
            <person name="Wagatsuma M."/>
            <person name="Shiratori A."/>
            <person name="Sudo H."/>
            <person name="Hosoiri T."/>
            <person name="Kaku Y."/>
            <person name="Kodaira H."/>
            <person name="Kondo H."/>
            <person name="Sugawara M."/>
            <person name="Takahashi M."/>
            <person name="Kanda K."/>
            <person name="Yokoi T."/>
            <person name="Furuya T."/>
            <person name="Kikkawa E."/>
            <person name="Omura Y."/>
            <person name="Abe K."/>
            <person name="Kamihara K."/>
            <person name="Katsuta N."/>
            <person name="Sato K."/>
            <person name="Tanikawa M."/>
            <person name="Yamazaki M."/>
            <person name="Ninomiya K."/>
            <person name="Ishibashi T."/>
            <person name="Yamashita H."/>
            <person name="Murakawa K."/>
            <person name="Fujimori K."/>
            <person name="Tanai H."/>
            <person name="Kimata M."/>
            <person name="Watanabe M."/>
            <person name="Hiraoka S."/>
            <person name="Chiba Y."/>
            <person name="Ishida S."/>
            <person name="Ono Y."/>
            <person name="Takiguchi S."/>
            <person name="Watanabe S."/>
            <person name="Yosida M."/>
            <person name="Hotuta T."/>
            <person name="Kusano J."/>
            <person name="Kanehori K."/>
            <person name="Takahashi-Fujii A."/>
            <person name="Hara H."/>
            <person name="Tanase T.-O."/>
            <person name="Nomura Y."/>
            <person name="Togiya S."/>
            <person name="Komai F."/>
            <person name="Hara R."/>
            <person name="Takeuchi K."/>
            <person name="Arita M."/>
            <person name="Imose N."/>
            <person name="Musashino K."/>
            <person name="Yuuki H."/>
            <person name="Oshima A."/>
            <person name="Sasaki N."/>
            <person name="Aotsuka S."/>
            <person name="Yoshikawa Y."/>
            <person name="Matsunawa H."/>
            <person name="Ichihara T."/>
            <person name="Shiohata N."/>
            <person name="Sano S."/>
            <person name="Moriya S."/>
            <person name="Momiyama H."/>
            <person name="Satoh N."/>
            <person name="Takami S."/>
            <person name="Terashima Y."/>
            <person name="Suzuki O."/>
            <person name="Nakagawa S."/>
            <person name="Senoh A."/>
            <person name="Mizoguchi H."/>
            <person name="Goto Y."/>
            <person name="Shimizu F."/>
            <person name="Wakebe H."/>
            <person name="Hishigaki H."/>
            <person name="Watanabe T."/>
            <person name="Sugiyama A."/>
            <person name="Takemoto M."/>
            <person name="Kawakami B."/>
            <person name="Yamazaki M."/>
            <person name="Watanabe K."/>
            <person name="Kumagai A."/>
            <person name="Itakura S."/>
            <person name="Fukuzumi Y."/>
            <person name="Fujimori Y."/>
            <person name="Komiyama M."/>
            <person name="Tashiro H."/>
            <person name="Tanigami A."/>
            <person name="Fujiwara T."/>
            <person name="Ono T."/>
            <person name="Yamada K."/>
            <person name="Fujii Y."/>
            <person name="Ozaki K."/>
            <person name="Hirao M."/>
            <person name="Ohmori Y."/>
            <person name="Kawabata A."/>
            <person name="Hikiji T."/>
            <person name="Kobatake N."/>
            <person name="Inagaki H."/>
            <person name="Ikema Y."/>
            <person name="Okamoto S."/>
            <person name="Okitani R."/>
            <person name="Kawakami T."/>
            <person name="Noguchi S."/>
            <person name="Itoh T."/>
            <person name="Shigeta K."/>
            <person name="Senba T."/>
            <person name="Matsumura K."/>
            <person name="Nakajima Y."/>
            <person name="Mizuno T."/>
            <person name="Morinaga M."/>
            <person name="Sasaki M."/>
            <person name="Togashi T."/>
            <person name="Oyama M."/>
            <person name="Hata H."/>
            <person name="Watanabe M."/>
            <person name="Komatsu T."/>
            <person name="Mizushima-Sugano J."/>
            <person name="Satoh T."/>
            <person name="Shirai Y."/>
            <person name="Takahashi Y."/>
            <person name="Nakagawa K."/>
            <person name="Okumura K."/>
            <person name="Nagase T."/>
            <person name="Nomura N."/>
            <person name="Kikuchi H."/>
            <person name="Masuho Y."/>
            <person name="Yamashita R."/>
            <person name="Nakai K."/>
            <person name="Yada T."/>
            <person name="Nakamura Y."/>
            <person name="Ohara O."/>
            <person name="Isogai T."/>
            <person name="Sugano S."/>
        </authorList>
    </citation>
    <scope>NUCLEOTIDE SEQUENCE [LARGE SCALE MRNA]</scope>
    <source>
        <tissue>Thymus</tissue>
    </source>
</reference>
<reference key="2">
    <citation type="submission" date="2005-09" db="EMBL/GenBank/DDBJ databases">
        <authorList>
            <person name="Mural R.J."/>
            <person name="Istrail S."/>
            <person name="Sutton G.G."/>
            <person name="Florea L."/>
            <person name="Halpern A.L."/>
            <person name="Mobarry C.M."/>
            <person name="Lippert R."/>
            <person name="Walenz B."/>
            <person name="Shatkay H."/>
            <person name="Dew I."/>
            <person name="Miller J.R."/>
            <person name="Flanigan M.J."/>
            <person name="Edwards N.J."/>
            <person name="Bolanos R."/>
            <person name="Fasulo D."/>
            <person name="Halldorsson B.V."/>
            <person name="Hannenhalli S."/>
            <person name="Turner R."/>
            <person name="Yooseph S."/>
            <person name="Lu F."/>
            <person name="Nusskern D.R."/>
            <person name="Shue B.C."/>
            <person name="Zheng X.H."/>
            <person name="Zhong F."/>
            <person name="Delcher A.L."/>
            <person name="Huson D.H."/>
            <person name="Kravitz S.A."/>
            <person name="Mouchard L."/>
            <person name="Reinert K."/>
            <person name="Remington K.A."/>
            <person name="Clark A.G."/>
            <person name="Waterman M.S."/>
            <person name="Eichler E.E."/>
            <person name="Adams M.D."/>
            <person name="Hunkapiller M.W."/>
            <person name="Myers E.W."/>
            <person name="Venter J.C."/>
        </authorList>
    </citation>
    <scope>NUCLEOTIDE SEQUENCE [LARGE SCALE GENOMIC DNA]</scope>
</reference>
<reference key="3">
    <citation type="journal article" date="2004" name="Genome Res.">
        <title>The status, quality, and expansion of the NIH full-length cDNA project: the Mammalian Gene Collection (MGC).</title>
        <authorList>
            <consortium name="The MGC Project Team"/>
        </authorList>
    </citation>
    <scope>NUCLEOTIDE SEQUENCE [LARGE SCALE MRNA]</scope>
    <source>
        <tissue>Lung</tissue>
        <tissue>Mammary gland</tissue>
        <tissue>Skin</tissue>
        <tissue>Testis</tissue>
    </source>
</reference>
<reference key="4">
    <citation type="submission" date="2005-08" db="EMBL/GenBank/DDBJ databases">
        <title>Identification of novel human genes predicted by combining multiple gene finders.</title>
        <authorList>
            <person name="Totoki Y."/>
            <person name="Yada T."/>
            <person name="Sakaki Y."/>
            <person name="Takeda T."/>
        </authorList>
    </citation>
    <scope>NUCLEOTIDE SEQUENCE [LARGE SCALE MRNA] OF 1-139</scope>
</reference>
<reference key="5">
    <citation type="journal article" date="2005" name="Nucleic Acids Res.">
        <title>Characterization of E2F8, a novel E2F-like cell-cycle regulated repressor of E2F-activated transcription.</title>
        <authorList>
            <person name="Christensen J."/>
            <person name="Cloos P."/>
            <person name="Toftegaard U."/>
            <person name="Klinkenberg D."/>
            <person name="Bracken A.P."/>
            <person name="Trinh E."/>
            <person name="Heeran M."/>
            <person name="Di Stefano L."/>
            <person name="Helin K."/>
        </authorList>
    </citation>
    <scope>FUNCTION</scope>
</reference>
<reference key="6">
    <citation type="journal article" date="2005" name="Oncogene">
        <title>E2F-8: an E2F family member with a similar organization of DNA-binding domains to E2F-7.</title>
        <authorList>
            <person name="Logan N."/>
            <person name="Graham A."/>
            <person name="Zhao X."/>
            <person name="Fisher R."/>
            <person name="Maiti B."/>
            <person name="Leone G."/>
            <person name="La Thangue N.B."/>
        </authorList>
    </citation>
    <scope>FUNCTION</scope>
    <scope>SUBCELLULAR LOCATION</scope>
    <scope>MUTAGENESIS OF ARG-156 AND ARG-314</scope>
</reference>
<reference key="7">
    <citation type="journal article" date="2008" name="Dev. Cell">
        <title>Synergistic function of E2F7 and E2F8 is essential for cell survival and embryonic development.</title>
        <authorList>
            <person name="Li J."/>
            <person name="Ran C."/>
            <person name="Li E."/>
            <person name="Gordon F."/>
            <person name="Comstock G."/>
            <person name="Siddiqui H."/>
            <person name="Cleghorn W."/>
            <person name="Chen H.-Z."/>
            <person name="Kornacker K."/>
            <person name="Liu C.-G."/>
            <person name="Pandit S.K."/>
            <person name="Khanizadeh M."/>
            <person name="Weinstein M."/>
            <person name="Leone G."/>
            <person name="de Bruin A."/>
        </authorList>
    </citation>
    <scope>SUBUNIT</scope>
</reference>
<reference key="8">
    <citation type="journal article" date="2008" name="EMBO Rep.">
        <title>DNA-damage response control of E2F7 and E2F8.</title>
        <authorList>
            <person name="Zalmas L.P."/>
            <person name="Zhao X."/>
            <person name="Graham A.L."/>
            <person name="Fisher R."/>
            <person name="Reilly C."/>
            <person name="Coutts A.S."/>
            <person name="La Thangue N.B."/>
        </authorList>
    </citation>
    <scope>FUNCTION</scope>
    <scope>SUBUNIT</scope>
    <scope>MUTAGENESIS OF ARG-156 AND ARG-314</scope>
</reference>
<reference key="9">
    <citation type="journal article" date="2008" name="J. Proteome Res.">
        <title>Combining protein-based IMAC, peptide-based IMAC, and MudPIT for efficient phosphoproteomic analysis.</title>
        <authorList>
            <person name="Cantin G.T."/>
            <person name="Yi W."/>
            <person name="Lu B."/>
            <person name="Park S.K."/>
            <person name="Xu T."/>
            <person name="Lee J.-D."/>
            <person name="Yates J.R. III"/>
        </authorList>
    </citation>
    <scope>IDENTIFICATION BY MASS SPECTROMETRY [LARGE SCALE ANALYSIS]</scope>
    <source>
        <tissue>Cervix carcinoma</tissue>
    </source>
</reference>
<reference key="10">
    <citation type="journal article" date="2012" name="EMBO J.">
        <title>E2F7 and E2F8 promote angiogenesis through transcriptional activation of VEGFA in cooperation with HIF1.</title>
        <authorList>
            <person name="Weijts B.G."/>
            <person name="Bakker W.J."/>
            <person name="Cornelissen P.W."/>
            <person name="Liang K.H."/>
            <person name="Schaftenaar F.H."/>
            <person name="Westendorp B."/>
            <person name="de Wolf C.A."/>
            <person name="Paciejewska M."/>
            <person name="Scheele C.L."/>
            <person name="Kent L."/>
            <person name="Leone G."/>
            <person name="Schulte-Merker S."/>
            <person name="de Bruin A."/>
        </authorList>
    </citation>
    <scope>FUNCTION</scope>
    <scope>INTERACTION WITH HIF1A</scope>
</reference>
<reference key="11">
    <citation type="journal article" date="2012" name="Genes Dev.">
        <title>E2F7, a novel target, is up-regulated by p53 and mediates DNA damage-dependent transcriptional repression.</title>
        <authorList>
            <person name="Carvajal L.A."/>
            <person name="Hamard P.J."/>
            <person name="Tonnessen C."/>
            <person name="Manfredi J.J."/>
        </authorList>
    </citation>
    <scope>LACK OF RESPONSE TO DNA DAMAGE</scope>
</reference>
<reference key="12">
    <citation type="journal article" date="2013" name="J. Proteome Res.">
        <title>Toward a comprehensive characterization of a human cancer cell phosphoproteome.</title>
        <authorList>
            <person name="Zhou H."/>
            <person name="Di Palma S."/>
            <person name="Preisinger C."/>
            <person name="Peng M."/>
            <person name="Polat A.N."/>
            <person name="Heck A.J."/>
            <person name="Mohammed S."/>
        </authorList>
    </citation>
    <scope>PHOSPHORYLATION [LARGE SCALE ANALYSIS] AT SER-71; SER-102; SER-413 AND SER-417</scope>
    <scope>IDENTIFICATION BY MASS SPECTROMETRY [LARGE SCALE ANALYSIS]</scope>
    <source>
        <tissue>Cervix carcinoma</tissue>
        <tissue>Erythroleukemia</tissue>
    </source>
</reference>
<keyword id="KW-0002">3D-structure</keyword>
<keyword id="KW-0010">Activator</keyword>
<keyword id="KW-0131">Cell cycle</keyword>
<keyword id="KW-0238">DNA-binding</keyword>
<keyword id="KW-0539">Nucleus</keyword>
<keyword id="KW-0597">Phosphoprotein</keyword>
<keyword id="KW-1267">Proteomics identification</keyword>
<keyword id="KW-1185">Reference proteome</keyword>
<keyword id="KW-0678">Repressor</keyword>
<keyword id="KW-0804">Transcription</keyword>
<keyword id="KW-0805">Transcription regulation</keyword>
<name>E2F8_HUMAN</name>
<comment type="function">
    <text evidence="4 5 7 8">Atypical E2F transcription factor that participates in various processes such as angiogenesis and polyploidization of specialized cells. Mainly acts as a transcription repressor that binds DNA independently of DP proteins and specifically recognizes the E2 recognition site 5'-TTTC[CG]CGC-3'. Directly represses transcription of classical E2F transcription factors such as E2F1: component of a feedback loop in S phase by repressing the expression of E2F1, thereby preventing p53/TP53-dependent apoptosis. Plays a key role in polyploidization of cells in placenta and liver by regulating the endocycle, probably by repressing genes promoting cytokinesis and antagonizing action of classical E2F proteins (E2F1, E2F2 and/or E2F3). Required for placental development by promoting polyploidization of trophoblast giant cells. Acts as a promoter of sprouting angiogenesis, possibly by acting as a transcription activator: associates with HIF1A, recognizes and binds the VEGFA promoter, which is different from canonical E2 recognition site, and activates expression of the VEGFA gene.</text>
</comment>
<comment type="subunit">
    <text evidence="6 7 8">Homodimer and heterodimer: mainly forms homodimers and, to a lesser extent, heterodimers with E2F8. Dimerization is important for DNA-binding. Interacts with HIF1A.</text>
</comment>
<comment type="interaction">
    <interactant intactId="EBI-7779316">
        <id>A0AVK6</id>
    </interactant>
    <interactant intactId="EBI-491169">
        <id>P07550</id>
        <label>ADRB2</label>
    </interactant>
    <organismsDiffer>false</organismsDiffer>
    <experiments>3</experiments>
</comment>
<comment type="interaction">
    <interactant intactId="EBI-7779316">
        <id>A0AVK6</id>
    </interactant>
    <interactant intactId="EBI-21535880">
        <id>Q92870-2</id>
        <label>APBB2</label>
    </interactant>
    <organismsDiffer>false</organismsDiffer>
    <experiments>3</experiments>
</comment>
<comment type="interaction">
    <interactant intactId="EBI-7779316">
        <id>A0AVK6</id>
    </interactant>
    <interactant intactId="EBI-10988864">
        <id>P46379-2</id>
        <label>BAG6</label>
    </interactant>
    <organismsDiffer>false</organismsDiffer>
    <experiments>3</experiments>
</comment>
<comment type="interaction">
    <interactant intactId="EBI-7779316">
        <id>A0AVK6</id>
    </interactant>
    <interactant intactId="EBI-718729">
        <id>P55212</id>
        <label>CASP6</label>
    </interactant>
    <organismsDiffer>false</organismsDiffer>
    <experiments>3</experiments>
</comment>
<comment type="interaction">
    <interactant intactId="EBI-7779316">
        <id>A0AVK6</id>
    </interactant>
    <interactant intactId="EBI-395638">
        <id>O14645</id>
        <label>DNALI1</label>
    </interactant>
    <organismsDiffer>false</organismsDiffer>
    <experiments>3</experiments>
</comment>
<comment type="interaction">
    <interactant intactId="EBI-7779316">
        <id>A0AVK6</id>
    </interactant>
    <interactant intactId="EBI-1386765">
        <id>Q96AV8</id>
        <label>E2F7</label>
    </interactant>
    <organismsDiffer>false</organismsDiffer>
    <experiments>4</experiments>
</comment>
<comment type="interaction">
    <interactant intactId="EBI-7779316">
        <id>A0AVK6</id>
    </interactant>
    <interactant intactId="EBI-348399">
        <id>P22607</id>
        <label>FGFR3</label>
    </interactant>
    <organismsDiffer>false</organismsDiffer>
    <experiments>3</experiments>
</comment>
<comment type="interaction">
    <interactant intactId="EBI-7779316">
        <id>A0AVK6</id>
    </interactant>
    <interactant intactId="EBI-741101">
        <id>Q13643</id>
        <label>FHL3</label>
    </interactant>
    <organismsDiffer>false</organismsDiffer>
    <experiments>3</experiments>
</comment>
<comment type="interaction">
    <interactant intactId="EBI-7779316">
        <id>A0AVK6</id>
    </interactant>
    <interactant intactId="EBI-8285963">
        <id>Q14957</id>
        <label>GRIN2C</label>
    </interactant>
    <organismsDiffer>false</organismsDiffer>
    <experiments>3</experiments>
</comment>
<comment type="interaction">
    <interactant intactId="EBI-7779316">
        <id>A0AVK6</id>
    </interactant>
    <interactant intactId="EBI-351506">
        <id>P06396</id>
        <label>GSN</label>
    </interactant>
    <organismsDiffer>false</organismsDiffer>
    <experiments>3</experiments>
</comment>
<comment type="interaction">
    <interactant intactId="EBI-7779316">
        <id>A0AVK6</id>
    </interactant>
    <interactant intactId="EBI-350145">
        <id>P01112</id>
        <label>HRAS</label>
    </interactant>
    <organismsDiffer>false</organismsDiffer>
    <experiments>3</experiments>
</comment>
<comment type="interaction">
    <interactant intactId="EBI-7779316">
        <id>A0AVK6</id>
    </interactant>
    <interactant intactId="EBI-466029">
        <id>P42858</id>
        <label>HTT</label>
    </interactant>
    <organismsDiffer>false</organismsDiffer>
    <experiments>12</experiments>
</comment>
<comment type="interaction">
    <interactant intactId="EBI-7779316">
        <id>A0AVK6</id>
    </interactant>
    <interactant intactId="EBI-948266">
        <id>O14901</id>
        <label>KLF11</label>
    </interactant>
    <organismsDiffer>false</organismsDiffer>
    <experiments>3</experiments>
</comment>
<comment type="interaction">
    <interactant intactId="EBI-7779316">
        <id>A0AVK6</id>
    </interactant>
    <interactant intactId="EBI-16439278">
        <id>Q6FHY5</id>
        <label>MEOX2</label>
    </interactant>
    <organismsDiffer>false</organismsDiffer>
    <experiments>3</experiments>
</comment>
<comment type="interaction">
    <interactant intactId="EBI-7779316">
        <id>A0AVK6</id>
    </interactant>
    <interactant intactId="EBI-752057">
        <id>Q7Z412</id>
        <label>PEX26</label>
    </interactant>
    <organismsDiffer>false</organismsDiffer>
    <experiments>3</experiments>
</comment>
<comment type="interaction">
    <interactant intactId="EBI-7779316">
        <id>A0AVK6</id>
    </interactant>
    <interactant intactId="EBI-985879">
        <id>P37840</id>
        <label>SNCA</label>
    </interactant>
    <organismsDiffer>false</organismsDiffer>
    <experiments>3</experiments>
</comment>
<comment type="interaction">
    <interactant intactId="EBI-7779316">
        <id>A0AVK6</id>
    </interactant>
    <interactant intactId="EBI-357085">
        <id>Q9UNE7</id>
        <label>STUB1</label>
    </interactant>
    <organismsDiffer>false</organismsDiffer>
    <experiments>3</experiments>
</comment>
<comment type="interaction">
    <interactant intactId="EBI-7779316">
        <id>A0AVK6</id>
    </interactant>
    <interactant intactId="EBI-717422">
        <id>Q12800</id>
        <label>TFCP2</label>
    </interactant>
    <organismsDiffer>false</organismsDiffer>
    <experiments>3</experiments>
</comment>
<comment type="interaction">
    <interactant intactId="EBI-7779316">
        <id>A0AVK6</id>
    </interactant>
    <interactant intactId="EBI-741480">
        <id>Q9UMX0</id>
        <label>UBQLN1</label>
    </interactant>
    <organismsDiffer>false</organismsDiffer>
    <experiments>3</experiments>
</comment>
<comment type="interaction">
    <interactant intactId="EBI-7779316">
        <id>A0AVK6</id>
    </interactant>
    <interactant intactId="EBI-25900580">
        <id>Q9Y649</id>
    </interactant>
    <organismsDiffer>false</organismsDiffer>
    <experiments>3</experiments>
</comment>
<comment type="subcellular location">
    <subcellularLocation>
        <location evidence="4">Nucleus</location>
    </subcellularLocation>
</comment>
<comment type="induction">
    <text evidence="7">Following DNA damage (PubMed:18202719). Up-regulation in response to DNA damage is not confirmed by PubMed:22802528.</text>
</comment>
<comment type="domain">
    <text evidence="1">In contrast to classical members of the E2F transcription factor, atypical members contain 2 DNA-binding domains and regulate transcription in a DP-independent manner. Both DNA-binding domains are required for DNA-binding and are proposed to form an intramolecular structure that is similar to the winged helix structure of the E2F-DP heterodimer (By similarity).</text>
</comment>
<comment type="similarity">
    <text evidence="9">Belongs to the E2F/DP family.</text>
</comment>
<comment type="sequence caution" evidence="9">
    <conflict type="erroneous initiation">
        <sequence resource="EMBL-CDS" id="AAH28244"/>
    </conflict>
    <text>Extended N-terminus.</text>
</comment>
<comment type="sequence caution" evidence="9">
    <conflict type="erroneous initiation">
        <sequence resource="EMBL-CDS" id="BAB15605"/>
    </conflict>
    <text>Truncated N-terminus.</text>
</comment>